<evidence type="ECO:0000255" key="1">
    <source>
        <dbReference type="HAMAP-Rule" id="MF_00473"/>
    </source>
</evidence>
<keyword id="KW-0963">Cytoplasm</keyword>
<keyword id="KW-0312">Gluconeogenesis</keyword>
<keyword id="KW-0324">Glycolysis</keyword>
<keyword id="KW-0413">Isomerase</keyword>
<keyword id="KW-1185">Reference proteome</keyword>
<proteinExistence type="inferred from homology"/>
<reference key="1">
    <citation type="journal article" date="2007" name="PLoS Biol.">
        <title>Evolution of symbiotic bacteria in the distal human intestine.</title>
        <authorList>
            <person name="Xu J."/>
            <person name="Mahowald M.A."/>
            <person name="Ley R.E."/>
            <person name="Lozupone C.A."/>
            <person name="Hamady M."/>
            <person name="Martens E.C."/>
            <person name="Henrissat B."/>
            <person name="Coutinho P.M."/>
            <person name="Minx P."/>
            <person name="Latreille P."/>
            <person name="Cordum H."/>
            <person name="Van Brunt A."/>
            <person name="Kim K."/>
            <person name="Fulton R.S."/>
            <person name="Fulton L.A."/>
            <person name="Clifton S.W."/>
            <person name="Wilson R.K."/>
            <person name="Knight R.D."/>
            <person name="Gordon J.I."/>
        </authorList>
    </citation>
    <scope>NUCLEOTIDE SEQUENCE [LARGE SCALE GENOMIC DNA]</scope>
    <source>
        <strain>ATCC 8503 / DSM 20701 / CIP 104284 / JCM 5825 / NCTC 11152</strain>
    </source>
</reference>
<feature type="chain" id="PRO_1000013994" description="Glucose-6-phosphate isomerase">
    <location>
        <begin position="1"/>
        <end position="447"/>
    </location>
</feature>
<feature type="active site" description="Proton donor" evidence="1">
    <location>
        <position position="289"/>
    </location>
</feature>
<feature type="active site" evidence="1">
    <location>
        <position position="310"/>
    </location>
</feature>
<feature type="active site" evidence="1">
    <location>
        <position position="424"/>
    </location>
</feature>
<name>G6PI_PARD8</name>
<organism>
    <name type="scientific">Parabacteroides distasonis (strain ATCC 8503 / DSM 20701 / CIP 104284 / JCM 5825 / NCTC 11152)</name>
    <dbReference type="NCBI Taxonomy" id="435591"/>
    <lineage>
        <taxon>Bacteria</taxon>
        <taxon>Pseudomonadati</taxon>
        <taxon>Bacteroidota</taxon>
        <taxon>Bacteroidia</taxon>
        <taxon>Bacteroidales</taxon>
        <taxon>Tannerellaceae</taxon>
        <taxon>Parabacteroides</taxon>
    </lineage>
</organism>
<sequence length="447" mass="48734">MKNISLNIDKALGTVSKEQVYAQEAKAMECIATLHNGNGAGNDFLGWLHLPSSITDAELADIENTANVLRSKCEVVVAIGIGGSYLGTKAVVEALNNSFDWLQNDRKNPVMLYAGHNIGEDYLYELSEVLKGKQFGIINISKSGTTTEPALAFRILKKQLEDAVGKEEAKHRIVAITDAKRGALRTLADQEGYKTFIIPDNVGGRFSVLTPVGLLPIAVAGISIRDLVAGAVSMEKATDASVPFADNMAAIYAATRNELYKNGKKIEILANFHPKLHYIAEWWKQLYGESEGKDGKGIFPASVDLTTDLHSMGQWIQDGERTIFETVISVEATDHSVLVPTDEADLDGLNFLAGKHVDEVNKMAELGTQLAHVDGGVPNIKVNMPEVSAFYIGQLFYFFEKACGISGYMLGVNPFNQPGVEAYKKNMFALLNKPGYEKESEAIKARL</sequence>
<comment type="function">
    <text evidence="1">Catalyzes the reversible isomerization of glucose-6-phosphate to fructose-6-phosphate.</text>
</comment>
<comment type="catalytic activity">
    <reaction evidence="1">
        <text>alpha-D-glucose 6-phosphate = beta-D-fructose 6-phosphate</text>
        <dbReference type="Rhea" id="RHEA:11816"/>
        <dbReference type="ChEBI" id="CHEBI:57634"/>
        <dbReference type="ChEBI" id="CHEBI:58225"/>
        <dbReference type="EC" id="5.3.1.9"/>
    </reaction>
</comment>
<comment type="pathway">
    <text evidence="1">Carbohydrate biosynthesis; gluconeogenesis.</text>
</comment>
<comment type="pathway">
    <text evidence="1">Carbohydrate degradation; glycolysis; D-glyceraldehyde 3-phosphate and glycerone phosphate from D-glucose: step 2/4.</text>
</comment>
<comment type="subcellular location">
    <subcellularLocation>
        <location evidence="1">Cytoplasm</location>
    </subcellularLocation>
</comment>
<comment type="similarity">
    <text evidence="1">Belongs to the GPI family.</text>
</comment>
<protein>
    <recommendedName>
        <fullName evidence="1">Glucose-6-phosphate isomerase</fullName>
        <shortName evidence="1">GPI</shortName>
        <ecNumber evidence="1">5.3.1.9</ecNumber>
    </recommendedName>
    <alternativeName>
        <fullName evidence="1">Phosphoglucose isomerase</fullName>
        <shortName evidence="1">PGI</shortName>
    </alternativeName>
    <alternativeName>
        <fullName evidence="1">Phosphohexose isomerase</fullName>
        <shortName evidence="1">PHI</shortName>
    </alternativeName>
</protein>
<dbReference type="EC" id="5.3.1.9" evidence="1"/>
<dbReference type="EMBL" id="CP000140">
    <property type="protein sequence ID" value="ABR41938.1"/>
    <property type="molecule type" value="Genomic_DNA"/>
</dbReference>
<dbReference type="RefSeq" id="WP_009276520.1">
    <property type="nucleotide sequence ID" value="NC_009615.1"/>
</dbReference>
<dbReference type="SMR" id="A6L8C4"/>
<dbReference type="STRING" id="435591.BDI_0148"/>
<dbReference type="PaxDb" id="435591-BDI_0148"/>
<dbReference type="KEGG" id="pdi:BDI_0148"/>
<dbReference type="eggNOG" id="COG0166">
    <property type="taxonomic scope" value="Bacteria"/>
</dbReference>
<dbReference type="HOGENOM" id="CLU_037303_0_1_10"/>
<dbReference type="BioCyc" id="PDIS435591:G1G5A-149-MONOMER"/>
<dbReference type="UniPathway" id="UPA00109">
    <property type="reaction ID" value="UER00181"/>
</dbReference>
<dbReference type="UniPathway" id="UPA00138"/>
<dbReference type="Proteomes" id="UP000000566">
    <property type="component" value="Chromosome"/>
</dbReference>
<dbReference type="GO" id="GO:0005829">
    <property type="term" value="C:cytosol"/>
    <property type="evidence" value="ECO:0007669"/>
    <property type="project" value="TreeGrafter"/>
</dbReference>
<dbReference type="GO" id="GO:0097367">
    <property type="term" value="F:carbohydrate derivative binding"/>
    <property type="evidence" value="ECO:0007669"/>
    <property type="project" value="InterPro"/>
</dbReference>
<dbReference type="GO" id="GO:0004347">
    <property type="term" value="F:glucose-6-phosphate isomerase activity"/>
    <property type="evidence" value="ECO:0007669"/>
    <property type="project" value="UniProtKB-UniRule"/>
</dbReference>
<dbReference type="GO" id="GO:0048029">
    <property type="term" value="F:monosaccharide binding"/>
    <property type="evidence" value="ECO:0007669"/>
    <property type="project" value="TreeGrafter"/>
</dbReference>
<dbReference type="GO" id="GO:0006094">
    <property type="term" value="P:gluconeogenesis"/>
    <property type="evidence" value="ECO:0007669"/>
    <property type="project" value="UniProtKB-UniRule"/>
</dbReference>
<dbReference type="GO" id="GO:0051156">
    <property type="term" value="P:glucose 6-phosphate metabolic process"/>
    <property type="evidence" value="ECO:0007669"/>
    <property type="project" value="TreeGrafter"/>
</dbReference>
<dbReference type="GO" id="GO:0006096">
    <property type="term" value="P:glycolytic process"/>
    <property type="evidence" value="ECO:0007669"/>
    <property type="project" value="UniProtKB-UniRule"/>
</dbReference>
<dbReference type="CDD" id="cd05015">
    <property type="entry name" value="SIS_PGI_1"/>
    <property type="match status" value="1"/>
</dbReference>
<dbReference type="CDD" id="cd05016">
    <property type="entry name" value="SIS_PGI_2"/>
    <property type="match status" value="1"/>
</dbReference>
<dbReference type="FunFam" id="3.40.50.10490:FF:000015">
    <property type="entry name" value="Glucose-6-phosphate isomerase"/>
    <property type="match status" value="1"/>
</dbReference>
<dbReference type="FunFam" id="3.40.50.10490:FF:000016">
    <property type="entry name" value="Glucose-6-phosphate isomerase"/>
    <property type="match status" value="1"/>
</dbReference>
<dbReference type="Gene3D" id="3.40.50.10490">
    <property type="entry name" value="Glucose-6-phosphate isomerase like protein, domain 1"/>
    <property type="match status" value="2"/>
</dbReference>
<dbReference type="HAMAP" id="MF_00473">
    <property type="entry name" value="G6P_isomerase"/>
    <property type="match status" value="1"/>
</dbReference>
<dbReference type="InterPro" id="IPR001672">
    <property type="entry name" value="G6P_Isomerase"/>
</dbReference>
<dbReference type="InterPro" id="IPR018189">
    <property type="entry name" value="Phosphoglucose_isomerase_CS"/>
</dbReference>
<dbReference type="InterPro" id="IPR046348">
    <property type="entry name" value="SIS_dom_sf"/>
</dbReference>
<dbReference type="InterPro" id="IPR035476">
    <property type="entry name" value="SIS_PGI_1"/>
</dbReference>
<dbReference type="InterPro" id="IPR035482">
    <property type="entry name" value="SIS_PGI_2"/>
</dbReference>
<dbReference type="NCBIfam" id="NF010697">
    <property type="entry name" value="PRK14097.1"/>
    <property type="match status" value="1"/>
</dbReference>
<dbReference type="PANTHER" id="PTHR11469">
    <property type="entry name" value="GLUCOSE-6-PHOSPHATE ISOMERASE"/>
    <property type="match status" value="1"/>
</dbReference>
<dbReference type="PANTHER" id="PTHR11469:SF1">
    <property type="entry name" value="GLUCOSE-6-PHOSPHATE ISOMERASE"/>
    <property type="match status" value="1"/>
</dbReference>
<dbReference type="Pfam" id="PF00342">
    <property type="entry name" value="PGI"/>
    <property type="match status" value="1"/>
</dbReference>
<dbReference type="PRINTS" id="PR00662">
    <property type="entry name" value="G6PISOMERASE"/>
</dbReference>
<dbReference type="SUPFAM" id="SSF53697">
    <property type="entry name" value="SIS domain"/>
    <property type="match status" value="1"/>
</dbReference>
<dbReference type="PROSITE" id="PS00765">
    <property type="entry name" value="P_GLUCOSE_ISOMERASE_1"/>
    <property type="match status" value="1"/>
</dbReference>
<dbReference type="PROSITE" id="PS00174">
    <property type="entry name" value="P_GLUCOSE_ISOMERASE_2"/>
    <property type="match status" value="1"/>
</dbReference>
<dbReference type="PROSITE" id="PS51463">
    <property type="entry name" value="P_GLUCOSE_ISOMERASE_3"/>
    <property type="match status" value="1"/>
</dbReference>
<accession>A6L8C4</accession>
<gene>
    <name evidence="1" type="primary">pgi</name>
    <name type="ordered locus">BDI_0148</name>
</gene>